<reference key="1">
    <citation type="journal article" date="2006" name="BMC Genomics">
        <title>Complete genome sequence of Shigella flexneri 5b and comparison with Shigella flexneri 2a.</title>
        <authorList>
            <person name="Nie H."/>
            <person name="Yang F."/>
            <person name="Zhang X."/>
            <person name="Yang J."/>
            <person name="Chen L."/>
            <person name="Wang J."/>
            <person name="Xiong Z."/>
            <person name="Peng J."/>
            <person name="Sun L."/>
            <person name="Dong J."/>
            <person name="Xue Y."/>
            <person name="Xu X."/>
            <person name="Chen S."/>
            <person name="Yao Z."/>
            <person name="Shen Y."/>
            <person name="Jin Q."/>
        </authorList>
    </citation>
    <scope>NUCLEOTIDE SEQUENCE [LARGE SCALE GENOMIC DNA]</scope>
    <source>
        <strain>8401</strain>
    </source>
</reference>
<feature type="chain" id="PRO_0000386258" description="GTPase Obg">
    <location>
        <begin position="1"/>
        <end position="390"/>
    </location>
</feature>
<feature type="domain" description="Obg" evidence="2">
    <location>
        <begin position="1"/>
        <end position="159"/>
    </location>
</feature>
<feature type="domain" description="OBG-type G" evidence="1">
    <location>
        <begin position="160"/>
        <end position="333"/>
    </location>
</feature>
<feature type="region of interest" description="Disordered" evidence="3">
    <location>
        <begin position="127"/>
        <end position="147"/>
    </location>
</feature>
<feature type="compositionally biased region" description="Polar residues" evidence="3">
    <location>
        <begin position="129"/>
        <end position="145"/>
    </location>
</feature>
<feature type="binding site" evidence="1">
    <location>
        <begin position="166"/>
        <end position="173"/>
    </location>
    <ligand>
        <name>GTP</name>
        <dbReference type="ChEBI" id="CHEBI:37565"/>
    </ligand>
</feature>
<feature type="binding site" evidence="1">
    <location>
        <position position="173"/>
    </location>
    <ligand>
        <name>Mg(2+)</name>
        <dbReference type="ChEBI" id="CHEBI:18420"/>
    </ligand>
</feature>
<feature type="binding site" evidence="1">
    <location>
        <begin position="191"/>
        <end position="195"/>
    </location>
    <ligand>
        <name>GTP</name>
        <dbReference type="ChEBI" id="CHEBI:37565"/>
    </ligand>
</feature>
<feature type="binding site" evidence="1">
    <location>
        <position position="193"/>
    </location>
    <ligand>
        <name>Mg(2+)</name>
        <dbReference type="ChEBI" id="CHEBI:18420"/>
    </ligand>
</feature>
<feature type="binding site" evidence="1">
    <location>
        <begin position="213"/>
        <end position="216"/>
    </location>
    <ligand>
        <name>GTP</name>
        <dbReference type="ChEBI" id="CHEBI:37565"/>
    </ligand>
</feature>
<feature type="binding site" evidence="1">
    <location>
        <begin position="283"/>
        <end position="286"/>
    </location>
    <ligand>
        <name>GTP</name>
        <dbReference type="ChEBI" id="CHEBI:37565"/>
    </ligand>
</feature>
<feature type="binding site" evidence="1">
    <location>
        <begin position="314"/>
        <end position="316"/>
    </location>
    <ligand>
        <name>GTP</name>
        <dbReference type="ChEBI" id="CHEBI:37565"/>
    </ligand>
</feature>
<proteinExistence type="inferred from homology"/>
<organism>
    <name type="scientific">Shigella flexneri serotype 5b (strain 8401)</name>
    <dbReference type="NCBI Taxonomy" id="373384"/>
    <lineage>
        <taxon>Bacteria</taxon>
        <taxon>Pseudomonadati</taxon>
        <taxon>Pseudomonadota</taxon>
        <taxon>Gammaproteobacteria</taxon>
        <taxon>Enterobacterales</taxon>
        <taxon>Enterobacteriaceae</taxon>
        <taxon>Shigella</taxon>
    </lineage>
</organism>
<evidence type="ECO:0000255" key="1">
    <source>
        <dbReference type="HAMAP-Rule" id="MF_01454"/>
    </source>
</evidence>
<evidence type="ECO:0000255" key="2">
    <source>
        <dbReference type="PROSITE-ProRule" id="PRU01231"/>
    </source>
</evidence>
<evidence type="ECO:0000256" key="3">
    <source>
        <dbReference type="SAM" id="MobiDB-lite"/>
    </source>
</evidence>
<name>OBG_SHIF8</name>
<accession>Q0T0A1</accession>
<dbReference type="EC" id="3.6.5.-" evidence="1"/>
<dbReference type="EMBL" id="CP000266">
    <property type="protein sequence ID" value="ABF05264.1"/>
    <property type="molecule type" value="Genomic_DNA"/>
</dbReference>
<dbReference type="SMR" id="Q0T0A1"/>
<dbReference type="KEGG" id="sfv:SFV_3213"/>
<dbReference type="HOGENOM" id="CLU_011747_2_0_6"/>
<dbReference type="Proteomes" id="UP000000659">
    <property type="component" value="Chromosome"/>
</dbReference>
<dbReference type="GO" id="GO:0005737">
    <property type="term" value="C:cytoplasm"/>
    <property type="evidence" value="ECO:0007669"/>
    <property type="project" value="UniProtKB-SubCell"/>
</dbReference>
<dbReference type="GO" id="GO:0005525">
    <property type="term" value="F:GTP binding"/>
    <property type="evidence" value="ECO:0007669"/>
    <property type="project" value="UniProtKB-UniRule"/>
</dbReference>
<dbReference type="GO" id="GO:0003924">
    <property type="term" value="F:GTPase activity"/>
    <property type="evidence" value="ECO:0007669"/>
    <property type="project" value="UniProtKB-UniRule"/>
</dbReference>
<dbReference type="GO" id="GO:0000287">
    <property type="term" value="F:magnesium ion binding"/>
    <property type="evidence" value="ECO:0007669"/>
    <property type="project" value="InterPro"/>
</dbReference>
<dbReference type="GO" id="GO:0042254">
    <property type="term" value="P:ribosome biogenesis"/>
    <property type="evidence" value="ECO:0007669"/>
    <property type="project" value="UniProtKB-UniRule"/>
</dbReference>
<dbReference type="CDD" id="cd01898">
    <property type="entry name" value="Obg"/>
    <property type="match status" value="1"/>
</dbReference>
<dbReference type="FunFam" id="2.70.210.12:FF:000001">
    <property type="entry name" value="GTPase Obg"/>
    <property type="match status" value="1"/>
</dbReference>
<dbReference type="FunFam" id="3.40.50.300:FF:000185">
    <property type="entry name" value="GTPase Obg"/>
    <property type="match status" value="1"/>
</dbReference>
<dbReference type="Gene3D" id="2.70.210.12">
    <property type="entry name" value="GTP1/OBG domain"/>
    <property type="match status" value="1"/>
</dbReference>
<dbReference type="Gene3D" id="3.40.50.300">
    <property type="entry name" value="P-loop containing nucleotide triphosphate hydrolases"/>
    <property type="match status" value="1"/>
</dbReference>
<dbReference type="HAMAP" id="MF_01454">
    <property type="entry name" value="GTPase_Obg"/>
    <property type="match status" value="1"/>
</dbReference>
<dbReference type="InterPro" id="IPR031167">
    <property type="entry name" value="G_OBG"/>
</dbReference>
<dbReference type="InterPro" id="IPR006073">
    <property type="entry name" value="GTP-bd"/>
</dbReference>
<dbReference type="InterPro" id="IPR014100">
    <property type="entry name" value="GTP-bd_Obg/CgtA"/>
</dbReference>
<dbReference type="InterPro" id="IPR006074">
    <property type="entry name" value="GTP1-OBG_CS"/>
</dbReference>
<dbReference type="InterPro" id="IPR006169">
    <property type="entry name" value="GTP1_OBG_dom"/>
</dbReference>
<dbReference type="InterPro" id="IPR036726">
    <property type="entry name" value="GTP1_OBG_dom_sf"/>
</dbReference>
<dbReference type="InterPro" id="IPR045086">
    <property type="entry name" value="OBG_GTPase"/>
</dbReference>
<dbReference type="InterPro" id="IPR027417">
    <property type="entry name" value="P-loop_NTPase"/>
</dbReference>
<dbReference type="NCBIfam" id="TIGR02729">
    <property type="entry name" value="Obg_CgtA"/>
    <property type="match status" value="1"/>
</dbReference>
<dbReference type="NCBIfam" id="NF008955">
    <property type="entry name" value="PRK12297.1"/>
    <property type="match status" value="1"/>
</dbReference>
<dbReference type="NCBIfam" id="NF008956">
    <property type="entry name" value="PRK12299.1"/>
    <property type="match status" value="1"/>
</dbReference>
<dbReference type="PANTHER" id="PTHR11702">
    <property type="entry name" value="DEVELOPMENTALLY REGULATED GTP-BINDING PROTEIN-RELATED"/>
    <property type="match status" value="1"/>
</dbReference>
<dbReference type="PANTHER" id="PTHR11702:SF31">
    <property type="entry name" value="MITOCHONDRIAL RIBOSOME-ASSOCIATED GTPASE 2"/>
    <property type="match status" value="1"/>
</dbReference>
<dbReference type="Pfam" id="PF01018">
    <property type="entry name" value="GTP1_OBG"/>
    <property type="match status" value="1"/>
</dbReference>
<dbReference type="Pfam" id="PF01926">
    <property type="entry name" value="MMR_HSR1"/>
    <property type="match status" value="1"/>
</dbReference>
<dbReference type="PIRSF" id="PIRSF002401">
    <property type="entry name" value="GTP_bd_Obg/CgtA"/>
    <property type="match status" value="1"/>
</dbReference>
<dbReference type="PRINTS" id="PR00326">
    <property type="entry name" value="GTP1OBG"/>
</dbReference>
<dbReference type="SUPFAM" id="SSF82051">
    <property type="entry name" value="Obg GTP-binding protein N-terminal domain"/>
    <property type="match status" value="1"/>
</dbReference>
<dbReference type="SUPFAM" id="SSF52540">
    <property type="entry name" value="P-loop containing nucleoside triphosphate hydrolases"/>
    <property type="match status" value="1"/>
</dbReference>
<dbReference type="PROSITE" id="PS51710">
    <property type="entry name" value="G_OBG"/>
    <property type="match status" value="1"/>
</dbReference>
<dbReference type="PROSITE" id="PS00905">
    <property type="entry name" value="GTP1_OBG"/>
    <property type="match status" value="1"/>
</dbReference>
<dbReference type="PROSITE" id="PS51883">
    <property type="entry name" value="OBG"/>
    <property type="match status" value="1"/>
</dbReference>
<sequence length="390" mass="43228">MKFVDEASILVVAGDGGNGCVSFRREKYIPKGGPDGGDGGDGGDVWMEADENLNTLIDYRFEKSFRAERGQNGASRDCTGKRGKDVTIKVPVGTRVIDQGTGETMGDMTKHGQRLLVAKGGWHGLGNTRFKSSVNRTPRQKTNGTPGDKRELLLELMLLADVGMLGMPNAGKSTFIRAVSAAKPKVADYPFTTLVPSLGVVRMDNEKSFVVADIPGLIEGAAEGAGLGIRFLKHLERCRVLLHLIDIDPIDGTDPVENARIIISELEKYSQDLAAKPRWLVFNKIDLLDKAEAEEKAKAIAEALGWEDKYYLISAASGLGVKDLCWDVMTFIIENPVVQAEEAKQPEKVEFMWDDYHRQQLEEIAEEDDEDWDDDWDEDDEEGVEFIYKR</sequence>
<keyword id="KW-0963">Cytoplasm</keyword>
<keyword id="KW-0342">GTP-binding</keyword>
<keyword id="KW-0378">Hydrolase</keyword>
<keyword id="KW-0460">Magnesium</keyword>
<keyword id="KW-0479">Metal-binding</keyword>
<keyword id="KW-0547">Nucleotide-binding</keyword>
<gene>
    <name evidence="1" type="primary">obg</name>
    <name type="ordered locus">SFV_3213</name>
</gene>
<comment type="function">
    <text evidence="1">An essential GTPase which binds GTP, GDP and possibly (p)ppGpp with moderate affinity, with high nucleotide exchange rates and a fairly low GTP hydrolysis rate. Plays a role in control of the cell cycle, stress response, ribosome biogenesis and in those bacteria that undergo differentiation, in morphogenesis control.</text>
</comment>
<comment type="cofactor">
    <cofactor evidence="1">
        <name>Mg(2+)</name>
        <dbReference type="ChEBI" id="CHEBI:18420"/>
    </cofactor>
</comment>
<comment type="subunit">
    <text evidence="1">Monomer.</text>
</comment>
<comment type="subcellular location">
    <subcellularLocation>
        <location evidence="1">Cytoplasm</location>
    </subcellularLocation>
</comment>
<comment type="similarity">
    <text evidence="1">Belongs to the TRAFAC class OBG-HflX-like GTPase superfamily. OBG GTPase family.</text>
</comment>
<protein>
    <recommendedName>
        <fullName evidence="1">GTPase Obg</fullName>
        <ecNumber evidence="1">3.6.5.-</ecNumber>
    </recommendedName>
    <alternativeName>
        <fullName evidence="1">GTP-binding protein Obg</fullName>
    </alternativeName>
</protein>